<name>ACDH1_MYCSK</name>
<feature type="chain" id="PRO_0000387684" description="Acetaldehyde dehydrogenase 1">
    <location>
        <begin position="1"/>
        <end position="310"/>
    </location>
</feature>
<feature type="active site" description="Acyl-thioester intermediate" evidence="1">
    <location>
        <position position="127"/>
    </location>
</feature>
<feature type="binding site" evidence="1">
    <location>
        <begin position="12"/>
        <end position="15"/>
    </location>
    <ligand>
        <name>NAD(+)</name>
        <dbReference type="ChEBI" id="CHEBI:57540"/>
    </ligand>
</feature>
<feature type="binding site" evidence="1">
    <location>
        <begin position="163"/>
        <end position="171"/>
    </location>
    <ligand>
        <name>NAD(+)</name>
        <dbReference type="ChEBI" id="CHEBI:57540"/>
    </ligand>
</feature>
<feature type="binding site" evidence="1">
    <location>
        <position position="282"/>
    </location>
    <ligand>
        <name>NAD(+)</name>
        <dbReference type="ChEBI" id="CHEBI:57540"/>
    </ligand>
</feature>
<accession>A1UM81</accession>
<evidence type="ECO:0000255" key="1">
    <source>
        <dbReference type="HAMAP-Rule" id="MF_01657"/>
    </source>
</evidence>
<sequence>MPEKLQVAIVGSGNISTDLLYKLQRSEYLEPRWMIGIDPESEGLARARKLGLETSHEGVDWLLAQDDKPDLVFEATSAYVHRAAAPRYEEAGIRAIDLTPAAVGPAVIPPANLREHLDAPNVNMITCGGQATIPIVYAVTRAVTEQGGTVPYAEIVASVSSSSAGPGTRANIDEFTKTTSKGVQTIGGAARGKAIIILNPADPPMIMRDTIFCAIPEDVDRDAIAQSIRDVVAEVQTYVPGYRLLNDPQFDDPSINSGGQAVVTTFVEVEGAGDYLPPYAGNLDIMTAAAAKVGEEIAKESLSLAGGAQA</sequence>
<reference key="1">
    <citation type="submission" date="2006-12" db="EMBL/GenBank/DDBJ databases">
        <title>Complete sequence of chromosome of Mycobacterium sp. KMS.</title>
        <authorList>
            <consortium name="US DOE Joint Genome Institute"/>
            <person name="Copeland A."/>
            <person name="Lucas S."/>
            <person name="Lapidus A."/>
            <person name="Barry K."/>
            <person name="Detter J.C."/>
            <person name="Glavina del Rio T."/>
            <person name="Hammon N."/>
            <person name="Israni S."/>
            <person name="Dalin E."/>
            <person name="Tice H."/>
            <person name="Pitluck S."/>
            <person name="Kiss H."/>
            <person name="Brettin T."/>
            <person name="Bruce D."/>
            <person name="Han C."/>
            <person name="Tapia R."/>
            <person name="Gilna P."/>
            <person name="Schmutz J."/>
            <person name="Larimer F."/>
            <person name="Land M."/>
            <person name="Hauser L."/>
            <person name="Kyrpides N."/>
            <person name="Mikhailova N."/>
            <person name="Miller C.D."/>
            <person name="Richardson P."/>
        </authorList>
    </citation>
    <scope>NUCLEOTIDE SEQUENCE [LARGE SCALE GENOMIC DNA]</scope>
    <source>
        <strain>KMS</strain>
    </source>
</reference>
<comment type="catalytic activity">
    <reaction evidence="1">
        <text>acetaldehyde + NAD(+) + CoA = acetyl-CoA + NADH + H(+)</text>
        <dbReference type="Rhea" id="RHEA:23288"/>
        <dbReference type="ChEBI" id="CHEBI:15343"/>
        <dbReference type="ChEBI" id="CHEBI:15378"/>
        <dbReference type="ChEBI" id="CHEBI:57287"/>
        <dbReference type="ChEBI" id="CHEBI:57288"/>
        <dbReference type="ChEBI" id="CHEBI:57540"/>
        <dbReference type="ChEBI" id="CHEBI:57945"/>
        <dbReference type="EC" id="1.2.1.10"/>
    </reaction>
</comment>
<comment type="similarity">
    <text evidence="1">Belongs to the acetaldehyde dehydrogenase family.</text>
</comment>
<proteinExistence type="inferred from homology"/>
<protein>
    <recommendedName>
        <fullName evidence="1">Acetaldehyde dehydrogenase 1</fullName>
        <ecNumber evidence="1">1.2.1.10</ecNumber>
    </recommendedName>
    <alternativeName>
        <fullName evidence="1">Acetaldehyde dehydrogenase [acetylating] 1</fullName>
    </alternativeName>
</protein>
<keyword id="KW-0058">Aromatic hydrocarbons catabolism</keyword>
<keyword id="KW-0520">NAD</keyword>
<keyword id="KW-0560">Oxidoreductase</keyword>
<dbReference type="EC" id="1.2.1.10" evidence="1"/>
<dbReference type="EMBL" id="CP000518">
    <property type="protein sequence ID" value="ABL93939.1"/>
    <property type="molecule type" value="Genomic_DNA"/>
</dbReference>
<dbReference type="SMR" id="A1UM81"/>
<dbReference type="STRING" id="189918.Mkms_4748"/>
<dbReference type="KEGG" id="mkm:Mkms_4748"/>
<dbReference type="HOGENOM" id="CLU_062208_0_0_11"/>
<dbReference type="OrthoDB" id="9786743at2"/>
<dbReference type="GO" id="GO:0008774">
    <property type="term" value="F:acetaldehyde dehydrogenase (acetylating) activity"/>
    <property type="evidence" value="ECO:0007669"/>
    <property type="project" value="UniProtKB-UniRule"/>
</dbReference>
<dbReference type="GO" id="GO:0051287">
    <property type="term" value="F:NAD binding"/>
    <property type="evidence" value="ECO:0007669"/>
    <property type="project" value="UniProtKB-UniRule"/>
</dbReference>
<dbReference type="GO" id="GO:0009056">
    <property type="term" value="P:catabolic process"/>
    <property type="evidence" value="ECO:0007669"/>
    <property type="project" value="UniProtKB-KW"/>
</dbReference>
<dbReference type="CDD" id="cd23933">
    <property type="entry name" value="ALDH_C"/>
    <property type="match status" value="1"/>
</dbReference>
<dbReference type="Gene3D" id="3.30.360.10">
    <property type="entry name" value="Dihydrodipicolinate Reductase, domain 2"/>
    <property type="match status" value="1"/>
</dbReference>
<dbReference type="Gene3D" id="3.40.50.720">
    <property type="entry name" value="NAD(P)-binding Rossmann-like Domain"/>
    <property type="match status" value="1"/>
</dbReference>
<dbReference type="HAMAP" id="MF_01657">
    <property type="entry name" value="Ac_ald_DH_ac"/>
    <property type="match status" value="1"/>
</dbReference>
<dbReference type="InterPro" id="IPR003361">
    <property type="entry name" value="Acetaldehyde_dehydrogenase"/>
</dbReference>
<dbReference type="InterPro" id="IPR015426">
    <property type="entry name" value="Acetylaldehyde_DH_C"/>
</dbReference>
<dbReference type="InterPro" id="IPR036291">
    <property type="entry name" value="NAD(P)-bd_dom_sf"/>
</dbReference>
<dbReference type="InterPro" id="IPR000534">
    <property type="entry name" value="Semialdehyde_DH_NAD-bd"/>
</dbReference>
<dbReference type="NCBIfam" id="TIGR03215">
    <property type="entry name" value="ac_ald_DH_ac"/>
    <property type="match status" value="1"/>
</dbReference>
<dbReference type="NCBIfam" id="NF006157">
    <property type="entry name" value="PRK08300.1"/>
    <property type="match status" value="1"/>
</dbReference>
<dbReference type="Pfam" id="PF09290">
    <property type="entry name" value="AcetDehyd-dimer"/>
    <property type="match status" value="1"/>
</dbReference>
<dbReference type="PIRSF" id="PIRSF015689">
    <property type="entry name" value="Actaldh_dh_actl"/>
    <property type="match status" value="1"/>
</dbReference>
<dbReference type="SMART" id="SM00859">
    <property type="entry name" value="Semialdhyde_dh"/>
    <property type="match status" value="1"/>
</dbReference>
<dbReference type="SUPFAM" id="SSF55347">
    <property type="entry name" value="Glyceraldehyde-3-phosphate dehydrogenase-like, C-terminal domain"/>
    <property type="match status" value="1"/>
</dbReference>
<dbReference type="SUPFAM" id="SSF51735">
    <property type="entry name" value="NAD(P)-binding Rossmann-fold domains"/>
    <property type="match status" value="1"/>
</dbReference>
<organism>
    <name type="scientific">Mycobacterium sp. (strain KMS)</name>
    <dbReference type="NCBI Taxonomy" id="189918"/>
    <lineage>
        <taxon>Bacteria</taxon>
        <taxon>Bacillati</taxon>
        <taxon>Actinomycetota</taxon>
        <taxon>Actinomycetes</taxon>
        <taxon>Mycobacteriales</taxon>
        <taxon>Mycobacteriaceae</taxon>
        <taxon>Mycobacterium</taxon>
    </lineage>
</organism>
<gene>
    <name type="ordered locus">Mkms_4748</name>
</gene>